<keyword id="KW-1003">Cell membrane</keyword>
<keyword id="KW-0472">Membrane</keyword>
<keyword id="KW-1185">Reference proteome</keyword>
<keyword id="KW-0812">Transmembrane</keyword>
<keyword id="KW-1133">Transmembrane helix</keyword>
<keyword id="KW-0813">Transport</keyword>
<comment type="subcellular location">
    <subcellularLocation>
        <location evidence="2">Cell membrane</location>
        <topology evidence="2">Multi-pass membrane protein</topology>
    </subcellularLocation>
</comment>
<comment type="similarity">
    <text evidence="2">Belongs to the major facilitator superfamily.</text>
</comment>
<reference key="1">
    <citation type="journal article" date="1998" name="Nature">
        <title>Deciphering the biology of Mycobacterium tuberculosis from the complete genome sequence.</title>
        <authorList>
            <person name="Cole S.T."/>
            <person name="Brosch R."/>
            <person name="Parkhill J."/>
            <person name="Garnier T."/>
            <person name="Churcher C.M."/>
            <person name="Harris D.E."/>
            <person name="Gordon S.V."/>
            <person name="Eiglmeier K."/>
            <person name="Gas S."/>
            <person name="Barry C.E. III"/>
            <person name="Tekaia F."/>
            <person name="Badcock K."/>
            <person name="Basham D."/>
            <person name="Brown D."/>
            <person name="Chillingworth T."/>
            <person name="Connor R."/>
            <person name="Davies R.M."/>
            <person name="Devlin K."/>
            <person name="Feltwell T."/>
            <person name="Gentles S."/>
            <person name="Hamlin N."/>
            <person name="Holroyd S."/>
            <person name="Hornsby T."/>
            <person name="Jagels K."/>
            <person name="Krogh A."/>
            <person name="McLean J."/>
            <person name="Moule S."/>
            <person name="Murphy L.D."/>
            <person name="Oliver S."/>
            <person name="Osborne J."/>
            <person name="Quail M.A."/>
            <person name="Rajandream M.A."/>
            <person name="Rogers J."/>
            <person name="Rutter S."/>
            <person name="Seeger K."/>
            <person name="Skelton S."/>
            <person name="Squares S."/>
            <person name="Squares R."/>
            <person name="Sulston J.E."/>
            <person name="Taylor K."/>
            <person name="Whitehead S."/>
            <person name="Barrell B.G."/>
        </authorList>
    </citation>
    <scope>NUCLEOTIDE SEQUENCE [LARGE SCALE GENOMIC DNA]</scope>
    <source>
        <strain>ATCC 25618 / H37Rv</strain>
    </source>
</reference>
<evidence type="ECO:0000255" key="1"/>
<evidence type="ECO:0000305" key="2"/>
<accession>P9WJX5</accession>
<accession>L0T7W9</accession>
<accession>O53861</accession>
<feature type="chain" id="PRO_0000390682" description="Uncharacterized MFS-type transporter Rv0849">
    <location>
        <begin position="1"/>
        <end position="419"/>
    </location>
</feature>
<feature type="transmembrane region" description="Helical" evidence="1">
    <location>
        <begin position="15"/>
        <end position="35"/>
    </location>
</feature>
<feature type="transmembrane region" description="Helical" evidence="1">
    <location>
        <begin position="36"/>
        <end position="56"/>
    </location>
</feature>
<feature type="transmembrane region" description="Helical" evidence="1">
    <location>
        <begin position="77"/>
        <end position="99"/>
    </location>
</feature>
<feature type="transmembrane region" description="Helical" evidence="1">
    <location>
        <begin position="104"/>
        <end position="126"/>
    </location>
</feature>
<feature type="transmembrane region" description="Helical" evidence="1">
    <location>
        <begin position="140"/>
        <end position="160"/>
    </location>
</feature>
<feature type="transmembrane region" description="Helical" evidence="1">
    <location>
        <begin position="166"/>
        <end position="186"/>
    </location>
</feature>
<feature type="transmembrane region" description="Helical" evidence="1">
    <location>
        <begin position="213"/>
        <end position="233"/>
    </location>
</feature>
<feature type="transmembrane region" description="Helical" evidence="1">
    <location>
        <begin position="246"/>
        <end position="266"/>
    </location>
</feature>
<feature type="transmembrane region" description="Helical" evidence="1">
    <location>
        <begin position="282"/>
        <end position="302"/>
    </location>
</feature>
<feature type="transmembrane region" description="Helical" evidence="1">
    <location>
        <begin position="309"/>
        <end position="329"/>
    </location>
</feature>
<feature type="transmembrane region" description="Helical" evidence="1">
    <location>
        <begin position="351"/>
        <end position="371"/>
    </location>
</feature>
<feature type="transmembrane region" description="Helical" evidence="1">
    <location>
        <begin position="377"/>
        <end position="397"/>
    </location>
</feature>
<gene>
    <name type="ordered locus">Rv0849</name>
</gene>
<proteinExistence type="inferred from homology"/>
<sequence length="419" mass="44514">MGARAIFRGFNRPSRVLMINQFGINIGFYMLMPYLADYLAGPLGLAAWAVGLVMGVRNFSQQGMFFVGGTLADRFGYKPLIIAGCLIRTGGFALLVVAQSLPSVLIAAAATGFAGALFNPAVRGYLAAEAGERKIEAFAMFNVFYQSGILLGPLVGLVLLALDFRITVLAAAGVFGLLTVAQLVALPQHRADSEREKTSILQDWRVVVRNRPFLTLAAAMTGCYALSFQIYLALPMQASILMPRNQYLLIAAMFAVSGLVAVGGQLRITRWFAVRWGAERSLVVGATILAASFIPVAVIPNGQRFGVAVAVMALVLSASLLAVASAALFPFEMRAVVALSGDRLVATHYGFYSTIVGVGVLVGNLAIGSLMSAARRLNTDEIVWGGLILVGIVAVAGLRRLDTFTSGSQNMTGRWAAPR</sequence>
<protein>
    <recommendedName>
        <fullName>Uncharacterized MFS-type transporter Rv0849</fullName>
    </recommendedName>
</protein>
<organism>
    <name type="scientific">Mycobacterium tuberculosis (strain ATCC 25618 / H37Rv)</name>
    <dbReference type="NCBI Taxonomy" id="83332"/>
    <lineage>
        <taxon>Bacteria</taxon>
        <taxon>Bacillati</taxon>
        <taxon>Actinomycetota</taxon>
        <taxon>Actinomycetes</taxon>
        <taxon>Mycobacteriales</taxon>
        <taxon>Mycobacteriaceae</taxon>
        <taxon>Mycobacterium</taxon>
        <taxon>Mycobacterium tuberculosis complex</taxon>
    </lineage>
</organism>
<name>Y849_MYCTU</name>
<dbReference type="EMBL" id="AL123456">
    <property type="protein sequence ID" value="CCP43597.1"/>
    <property type="molecule type" value="Genomic_DNA"/>
</dbReference>
<dbReference type="PIR" id="A70814">
    <property type="entry name" value="A70814"/>
</dbReference>
<dbReference type="RefSeq" id="NP_215364.1">
    <property type="nucleotide sequence ID" value="NC_000962.3"/>
</dbReference>
<dbReference type="RefSeq" id="WP_003404402.1">
    <property type="nucleotide sequence ID" value="NZ_NVQJ01000040.1"/>
</dbReference>
<dbReference type="SMR" id="P9WJX5"/>
<dbReference type="FunCoup" id="P9WJX5">
    <property type="interactions" value="4"/>
</dbReference>
<dbReference type="STRING" id="83332.Rv0849"/>
<dbReference type="PaxDb" id="83332-Rv0849"/>
<dbReference type="DNASU" id="885111"/>
<dbReference type="GeneID" id="885111"/>
<dbReference type="KEGG" id="mtu:Rv0849"/>
<dbReference type="KEGG" id="mtv:RVBD_0849"/>
<dbReference type="TubercuList" id="Rv0849"/>
<dbReference type="eggNOG" id="COG2814">
    <property type="taxonomic scope" value="Bacteria"/>
</dbReference>
<dbReference type="InParanoid" id="P9WJX5"/>
<dbReference type="OrthoDB" id="3285778at2"/>
<dbReference type="PhylomeDB" id="P9WJX5"/>
<dbReference type="Proteomes" id="UP000001584">
    <property type="component" value="Chromosome"/>
</dbReference>
<dbReference type="GO" id="GO:0005886">
    <property type="term" value="C:plasma membrane"/>
    <property type="evidence" value="ECO:0007669"/>
    <property type="project" value="UniProtKB-SubCell"/>
</dbReference>
<dbReference type="GO" id="GO:0022857">
    <property type="term" value="F:transmembrane transporter activity"/>
    <property type="evidence" value="ECO:0007669"/>
    <property type="project" value="InterPro"/>
</dbReference>
<dbReference type="CDD" id="cd17329">
    <property type="entry name" value="MFS_MdtH_MDR_like"/>
    <property type="match status" value="1"/>
</dbReference>
<dbReference type="Gene3D" id="1.20.1250.20">
    <property type="entry name" value="MFS general substrate transporter like domains"/>
    <property type="match status" value="1"/>
</dbReference>
<dbReference type="InterPro" id="IPR011701">
    <property type="entry name" value="MFS"/>
</dbReference>
<dbReference type="InterPro" id="IPR020846">
    <property type="entry name" value="MFS_dom"/>
</dbReference>
<dbReference type="InterPro" id="IPR036259">
    <property type="entry name" value="MFS_trans_sf"/>
</dbReference>
<dbReference type="InterPro" id="IPR052425">
    <property type="entry name" value="Uncharacterized_MFS-type"/>
</dbReference>
<dbReference type="PANTHER" id="PTHR42688:SF1">
    <property type="entry name" value="BLR5212 PROTEIN"/>
    <property type="match status" value="1"/>
</dbReference>
<dbReference type="PANTHER" id="PTHR42688">
    <property type="entry name" value="CONSERVED PROTEIN"/>
    <property type="match status" value="1"/>
</dbReference>
<dbReference type="Pfam" id="PF07690">
    <property type="entry name" value="MFS_1"/>
    <property type="match status" value="1"/>
</dbReference>
<dbReference type="SUPFAM" id="SSF103473">
    <property type="entry name" value="MFS general substrate transporter"/>
    <property type="match status" value="1"/>
</dbReference>
<dbReference type="PROSITE" id="PS50850">
    <property type="entry name" value="MFS"/>
    <property type="match status" value="1"/>
</dbReference>